<accession>A0ZSF3</accession>
<organism>
    <name type="scientific">Pinctada maxima</name>
    <name type="common">Silver-lipped pearl oyster</name>
    <name type="synonym">White-lipped pearl oyster</name>
    <dbReference type="NCBI Taxonomy" id="104660"/>
    <lineage>
        <taxon>Eukaryota</taxon>
        <taxon>Metazoa</taxon>
        <taxon>Spiralia</taxon>
        <taxon>Lophotrochozoa</taxon>
        <taxon>Mollusca</taxon>
        <taxon>Bivalvia</taxon>
        <taxon>Autobranchia</taxon>
        <taxon>Pteriomorphia</taxon>
        <taxon>Pterioida</taxon>
        <taxon>Pterioidea</taxon>
        <taxon>Pteriidae</taxon>
        <taxon>Pinctada</taxon>
    </lineage>
</organism>
<proteinExistence type="evidence at protein level"/>
<name>MAM_PINMA</name>
<comment type="function">
    <text evidence="1 5">Acts as a negative regulator for calcification in the shells of mollusks. May function both as a calcium concentrator and as a carbonic anhydrase required for production of carbonate ions, which are assembled to CaCO(3) at mineralization sites. Is important for shell formation in both the calcitic prismatic layer and the aragonitic nacreous layerr (By similarity). Shows inhibitory activity of crystal formation when present in free state but, when attached to the insoluble matrix, may regulate the form and size of aragonite crystal.</text>
</comment>
<comment type="catalytic activity">
    <reaction>
        <text>hydrogencarbonate + H(+) = CO2 + H2O</text>
        <dbReference type="Rhea" id="RHEA:10748"/>
        <dbReference type="ChEBI" id="CHEBI:15377"/>
        <dbReference type="ChEBI" id="CHEBI:15378"/>
        <dbReference type="ChEBI" id="CHEBI:16526"/>
        <dbReference type="ChEBI" id="CHEBI:17544"/>
        <dbReference type="EC" id="4.2.1.1"/>
    </reaction>
</comment>
<comment type="cofactor">
    <cofactor evidence="1">
        <name>Zn(2+)</name>
        <dbReference type="ChEBI" id="CHEBI:29105"/>
    </cofactor>
</comment>
<comment type="subunit">
    <text evidence="1">Homooligomer; disulfide-linked. May also be disulfide-linked to insoluble organic matrix (By similarity).</text>
</comment>
<comment type="subcellular location">
    <subcellularLocation>
        <location evidence="1">Secreted</location>
        <location evidence="1">Extracellular space</location>
        <location evidence="1">Extracellular matrix</location>
    </subcellularLocation>
</comment>
<comment type="tissue specificity">
    <text>Expressed in the mantle.</text>
</comment>
<comment type="miscellaneous">
    <text>Two hypotheses for calcium binding are proposed. Either the Gly-Xaa-Asn repeat domain bind calcium or sulfite and sialic acid provide the necessary negative charge in the N-glycan to promote calcium uptake.</text>
</comment>
<comment type="similarity">
    <text evidence="6">Belongs to the alpha-carbonic anhydrase family.</text>
</comment>
<keyword id="KW-0106">Calcium</keyword>
<keyword id="KW-1015">Disulfide bond</keyword>
<keyword id="KW-0272">Extracellular matrix</keyword>
<keyword id="KW-0325">Glycoprotein</keyword>
<keyword id="KW-0456">Lyase</keyword>
<keyword id="KW-0479">Metal-binding</keyword>
<keyword id="KW-0677">Repeat</keyword>
<keyword id="KW-0964">Secreted</keyword>
<keyword id="KW-0862">Zinc</keyword>
<evidence type="ECO:0000250" key="1"/>
<evidence type="ECO:0000255" key="2"/>
<evidence type="ECO:0000255" key="3">
    <source>
        <dbReference type="PROSITE-ProRule" id="PRU01134"/>
    </source>
</evidence>
<evidence type="ECO:0000256" key="4">
    <source>
        <dbReference type="SAM" id="MobiDB-lite"/>
    </source>
</evidence>
<evidence type="ECO:0000269" key="5">
    <source>
    </source>
</evidence>
<evidence type="ECO:0000305" key="6"/>
<feature type="chain" id="PRO_0000379796" description="Nacrein-like protein M">
    <location>
        <begin position="1"/>
        <end position="421"/>
    </location>
</feature>
<feature type="domain" description="Alpha-carbonic anhydrase" evidence="3">
    <location>
        <begin position="33"/>
        <end position="420"/>
    </location>
</feature>
<feature type="repeat" description="1">
    <location>
        <begin position="225"/>
        <end position="227"/>
    </location>
</feature>
<feature type="repeat" description="2">
    <location>
        <begin position="228"/>
        <end position="230"/>
    </location>
</feature>
<feature type="repeat" description="3">
    <location>
        <begin position="231"/>
        <end position="233"/>
    </location>
</feature>
<feature type="repeat" description="4">
    <location>
        <begin position="234"/>
        <end position="236"/>
    </location>
</feature>
<feature type="repeat" description="5">
    <location>
        <begin position="237"/>
        <end position="239"/>
    </location>
</feature>
<feature type="repeat" description="6">
    <location>
        <begin position="240"/>
        <end position="242"/>
    </location>
</feature>
<feature type="repeat" description="7">
    <location>
        <begin position="243"/>
        <end position="245"/>
    </location>
</feature>
<feature type="repeat" description="8">
    <location>
        <begin position="246"/>
        <end position="248"/>
    </location>
</feature>
<feature type="repeat" description="9">
    <location>
        <begin position="249"/>
        <end position="251"/>
    </location>
</feature>
<feature type="repeat" description="10">
    <location>
        <begin position="252"/>
        <end position="254"/>
    </location>
</feature>
<feature type="repeat" description="11">
    <location>
        <begin position="255"/>
        <end position="257"/>
    </location>
</feature>
<feature type="repeat" description="12">
    <location>
        <begin position="258"/>
        <end position="260"/>
    </location>
</feature>
<feature type="repeat" description="13">
    <location>
        <begin position="261"/>
        <end position="263"/>
    </location>
</feature>
<feature type="repeat" description="14">
    <location>
        <begin position="264"/>
        <end position="266"/>
    </location>
</feature>
<feature type="repeat" description="15">
    <location>
        <begin position="267"/>
        <end position="269"/>
    </location>
</feature>
<feature type="repeat" description="16">
    <location>
        <begin position="270"/>
        <end position="272"/>
    </location>
</feature>
<feature type="repeat" description="17">
    <location>
        <begin position="273"/>
        <end position="275"/>
    </location>
</feature>
<feature type="repeat" description="18">
    <location>
        <begin position="276"/>
        <end position="278"/>
    </location>
</feature>
<feature type="repeat" description="19">
    <location>
        <begin position="279"/>
        <end position="281"/>
    </location>
</feature>
<feature type="repeat" description="20">
    <location>
        <begin position="282"/>
        <end position="284"/>
    </location>
</feature>
<feature type="repeat" description="21">
    <location>
        <begin position="285"/>
        <end position="287"/>
    </location>
</feature>
<feature type="repeat" description="22">
    <location>
        <begin position="288"/>
        <end position="290"/>
    </location>
</feature>
<feature type="repeat" description="23">
    <location>
        <begin position="291"/>
        <end position="292"/>
    </location>
</feature>
<feature type="repeat" description="24">
    <location>
        <begin position="294"/>
        <end position="296"/>
    </location>
</feature>
<feature type="region of interest" description="Disordered" evidence="4">
    <location>
        <begin position="197"/>
        <end position="303"/>
    </location>
</feature>
<feature type="region of interest" description="24 X 3 AA approximate tandem repeats of G-X-N">
    <location>
        <begin position="225"/>
        <end position="296"/>
    </location>
</feature>
<feature type="compositionally biased region" description="Acidic residues" evidence="4">
    <location>
        <begin position="197"/>
        <end position="206"/>
    </location>
</feature>
<feature type="compositionally biased region" description="Basic and acidic residues" evidence="4">
    <location>
        <begin position="207"/>
        <end position="219"/>
    </location>
</feature>
<feature type="compositionally biased region" description="Low complexity" evidence="4">
    <location>
        <begin position="220"/>
        <end position="295"/>
    </location>
</feature>
<feature type="binding site" evidence="3">
    <location>
        <position position="132"/>
    </location>
    <ligand>
        <name>Zn(2+)</name>
        <dbReference type="ChEBI" id="CHEBI:29105"/>
        <note>catalytic</note>
    </ligand>
</feature>
<feature type="binding site" evidence="3">
    <location>
        <position position="134"/>
    </location>
    <ligand>
        <name>Zn(2+)</name>
        <dbReference type="ChEBI" id="CHEBI:29105"/>
        <note>catalytic</note>
    </ligand>
</feature>
<feature type="binding site" evidence="3">
    <location>
        <position position="157"/>
    </location>
    <ligand>
        <name>Zn(2+)</name>
        <dbReference type="ChEBI" id="CHEBI:29105"/>
        <note>catalytic</note>
    </ligand>
</feature>
<feature type="binding site" evidence="1">
    <location>
        <begin position="361"/>
        <end position="362"/>
    </location>
    <ligand>
        <name>substrate</name>
    </ligand>
</feature>
<feature type="glycosylation site" description="N-linked (GlcNAc...) asparagine" evidence="2">
    <location>
        <position position="27"/>
    </location>
</feature>
<protein>
    <recommendedName>
        <fullName>Nacrein-like protein M</fullName>
        <ecNumber>4.2.1.1</ecNumber>
    </recommendedName>
</protein>
<reference key="1">
    <citation type="journal article" date="2008" name="Mar. Biotechnol.">
        <title>Distribution and function of the nacrein-related proteins inferred from structural analysis.</title>
        <authorList>
            <person name="Norizuki M."/>
            <person name="Samata T."/>
        </authorList>
    </citation>
    <scope>NUCLEOTIDE SEQUENCE [MRNA]</scope>
    <scope>FUNCTION</scope>
    <scope>CRYSTALLIZATION</scope>
    <source>
        <tissue>Gill</tissue>
        <tissue>Mantle</tissue>
    </source>
</reference>
<dbReference type="EC" id="4.2.1.1"/>
<dbReference type="EMBL" id="AB252480">
    <property type="protein sequence ID" value="BAF42330.1"/>
    <property type="molecule type" value="mRNA"/>
</dbReference>
<dbReference type="SMR" id="A0ZSF3"/>
<dbReference type="GO" id="GO:0005576">
    <property type="term" value="C:extracellular region"/>
    <property type="evidence" value="ECO:0007669"/>
    <property type="project" value="UniProtKB-KW"/>
</dbReference>
<dbReference type="GO" id="GO:0004089">
    <property type="term" value="F:carbonate dehydratase activity"/>
    <property type="evidence" value="ECO:0007669"/>
    <property type="project" value="UniProtKB-EC"/>
</dbReference>
<dbReference type="GO" id="GO:0008270">
    <property type="term" value="F:zinc ion binding"/>
    <property type="evidence" value="ECO:0007669"/>
    <property type="project" value="InterPro"/>
</dbReference>
<dbReference type="CDD" id="cd03124">
    <property type="entry name" value="alpha_CA_prokaryotic_like"/>
    <property type="match status" value="1"/>
</dbReference>
<dbReference type="Gene3D" id="3.10.200.10">
    <property type="entry name" value="Alpha carbonic anhydrase"/>
    <property type="match status" value="2"/>
</dbReference>
<dbReference type="InterPro" id="IPR041891">
    <property type="entry name" value="Alpha_CA_prokaryot-like"/>
</dbReference>
<dbReference type="InterPro" id="IPR001148">
    <property type="entry name" value="CA_dom"/>
</dbReference>
<dbReference type="InterPro" id="IPR036398">
    <property type="entry name" value="CA_dom_sf"/>
</dbReference>
<dbReference type="InterPro" id="IPR023561">
    <property type="entry name" value="Carbonic_anhydrase_a-class"/>
</dbReference>
<dbReference type="InterPro" id="IPR008160">
    <property type="entry name" value="Collagen"/>
</dbReference>
<dbReference type="PANTHER" id="PTHR18952">
    <property type="entry name" value="CARBONIC ANHYDRASE"/>
    <property type="match status" value="1"/>
</dbReference>
<dbReference type="PANTHER" id="PTHR18952:SF265">
    <property type="entry name" value="CARBONIC ANHYDRASE"/>
    <property type="match status" value="1"/>
</dbReference>
<dbReference type="Pfam" id="PF00194">
    <property type="entry name" value="Carb_anhydrase"/>
    <property type="match status" value="2"/>
</dbReference>
<dbReference type="Pfam" id="PF01391">
    <property type="entry name" value="Collagen"/>
    <property type="match status" value="2"/>
</dbReference>
<dbReference type="SMART" id="SM01057">
    <property type="entry name" value="Carb_anhydrase"/>
    <property type="match status" value="1"/>
</dbReference>
<dbReference type="SUPFAM" id="SSF51069">
    <property type="entry name" value="Carbonic anhydrase"/>
    <property type="match status" value="1"/>
</dbReference>
<dbReference type="PROSITE" id="PS51144">
    <property type="entry name" value="ALPHA_CA_2"/>
    <property type="match status" value="1"/>
</dbReference>
<sequence length="421" mass="47430">ASMFKHDHYMDNGVRYPNGDGICEQLNETKCDAGFSYDRSICEGPHYWHTISKWFIACGIGQRQSPINIVSYDAKFRQRLPKLKFKPHMEKLKTEVTNHQNRAPEFEPEDGENLYVKLNNLVDGHYKFHNLHVHNGRTRRKGSEHSVNGRFTPMEAHLVFHHDDQTHFEPTRTKLGGAFPGHNDFVVVGVFHEVGDDGFGDEPDDEECKRILKGHHPDNNENGNGDNGNNGYNGDNGNNGDNGNNGYNGDNGNNGDNGNNGYNGDNGNNGDNGNNGENGNNGENGNNGDNGNNGENGHKHGCRVKKAKHLSRILECAYRNDKVREFKKVGEEEGLDVHLTPEMALPPLKYRHYYTYEGSLTTPPCTESVLWVVQKCHVQVSRRVLHALRNVEGYKDGTTLRKYGTRRPTQKNKVTVYKSFK</sequence>